<feature type="initiator methionine" description="Removed" evidence="1">
    <location>
        <position position="1"/>
    </location>
</feature>
<feature type="chain" id="PRO_0000321532" description="Tetratricopeptide repeat protein 38">
    <location>
        <begin position="2"/>
        <end position="469"/>
    </location>
</feature>
<feature type="repeat" description="TPR 1">
    <location>
        <begin position="108"/>
        <end position="141"/>
    </location>
</feature>
<feature type="repeat" description="TPR 2">
    <location>
        <begin position="180"/>
        <end position="213"/>
    </location>
</feature>
<feature type="repeat" description="TPR 3">
    <location>
        <begin position="252"/>
        <end position="285"/>
    </location>
</feature>
<feature type="modified residue" description="N-acetylalanine" evidence="1">
    <location>
        <position position="2"/>
    </location>
</feature>
<feature type="modified residue" description="Phosphoserine" evidence="1">
    <location>
        <position position="5"/>
    </location>
</feature>
<gene>
    <name type="primary">TTC38</name>
</gene>
<comment type="similarity">
    <text evidence="2">Belongs to the TTC38 family.</text>
</comment>
<protein>
    <recommendedName>
        <fullName>Tetratricopeptide repeat protein 38</fullName>
        <shortName>TPR repeat protein 38</shortName>
    </recommendedName>
</protein>
<sequence length="469" mass="52727">MAATSPLRDCQAWKDARLPLSTTSNEACKLFDATLTQYVKWTNDKSLGGIEGCLSKLKAADPTFAMGHAISTGLVLIGTGSSVKLDKELDLAVKTMMEVSRTQPLTRREQLHVSAVETFAKGNFPKACELWEQILQDHPTDMLALKFSHDAYFYLGYQEQMRDSVARIYPFWTPDIPLSSYVKGIYSFGLMETNFYDQAEKLAKEALSINPTDAWSVHTVAHIHEMKAEIKDGLEFMQHSETLWKDSDMLACHNYWHWALYLIEKGEYEAALTIYDTHILPSLQANGAMLDVVDSCSMLYRLQMEGVSVGQRWQDVLPVTRKHSRDHTLLFNDAHFLMASLGAHDPQTTQELLTTLRDASESPGENCQHLLARDVGLPLCQALVEAEDGNPDRVLELLLPIRYRIVQLGGSNAQRDVFNQLLIHAALNCTSSVHKNVARSLLMERDALKPNSPLTERLIRKAATVHLLQ</sequence>
<organism>
    <name type="scientific">Pongo abelii</name>
    <name type="common">Sumatran orangutan</name>
    <name type="synonym">Pongo pygmaeus abelii</name>
    <dbReference type="NCBI Taxonomy" id="9601"/>
    <lineage>
        <taxon>Eukaryota</taxon>
        <taxon>Metazoa</taxon>
        <taxon>Chordata</taxon>
        <taxon>Craniata</taxon>
        <taxon>Vertebrata</taxon>
        <taxon>Euteleostomi</taxon>
        <taxon>Mammalia</taxon>
        <taxon>Eutheria</taxon>
        <taxon>Euarchontoglires</taxon>
        <taxon>Primates</taxon>
        <taxon>Haplorrhini</taxon>
        <taxon>Catarrhini</taxon>
        <taxon>Hominidae</taxon>
        <taxon>Pongo</taxon>
    </lineage>
</organism>
<reference key="1">
    <citation type="submission" date="2004-11" db="EMBL/GenBank/DDBJ databases">
        <authorList>
            <consortium name="The German cDNA consortium"/>
        </authorList>
    </citation>
    <scope>NUCLEOTIDE SEQUENCE [LARGE SCALE MRNA]</scope>
    <source>
        <tissue>Heart</tissue>
        <tissue>Kidney</tissue>
    </source>
</reference>
<name>TTC38_PONAB</name>
<dbReference type="EMBL" id="CR857105">
    <property type="protein sequence ID" value="CAH89410.1"/>
    <property type="molecule type" value="mRNA"/>
</dbReference>
<dbReference type="EMBL" id="CR857201">
    <property type="protein sequence ID" value="CAH89500.1"/>
    <property type="molecule type" value="mRNA"/>
</dbReference>
<dbReference type="RefSeq" id="NP_001124594.1">
    <property type="nucleotide sequence ID" value="NM_001131122.2"/>
</dbReference>
<dbReference type="SMR" id="Q5RFF7"/>
<dbReference type="FunCoup" id="Q5RFF7">
    <property type="interactions" value="247"/>
</dbReference>
<dbReference type="Ensembl" id="ENSPPYT00000013872.3">
    <property type="protein sequence ID" value="ENSPPYP00000013332.2"/>
    <property type="gene ID" value="ENSPPYG00000011946.3"/>
</dbReference>
<dbReference type="GeneID" id="100171430"/>
<dbReference type="KEGG" id="pon:100171430"/>
<dbReference type="CTD" id="55020"/>
<dbReference type="eggNOG" id="KOG2610">
    <property type="taxonomic scope" value="Eukaryota"/>
</dbReference>
<dbReference type="GeneTree" id="ENSGT00390000002669"/>
<dbReference type="HOGENOM" id="CLU_029972_1_2_1"/>
<dbReference type="InParanoid" id="Q5RFF7"/>
<dbReference type="OMA" id="YAFNDVH"/>
<dbReference type="OrthoDB" id="1427555at2759"/>
<dbReference type="TreeFam" id="TF313343"/>
<dbReference type="Proteomes" id="UP000001595">
    <property type="component" value="Chromosome 22"/>
</dbReference>
<dbReference type="CDD" id="cd05804">
    <property type="entry name" value="StaR_like"/>
    <property type="match status" value="1"/>
</dbReference>
<dbReference type="FunFam" id="1.25.40.10:FF:000311">
    <property type="entry name" value="Tetratricopeptide repeat domain 38"/>
    <property type="match status" value="1"/>
</dbReference>
<dbReference type="Gene3D" id="1.25.40.10">
    <property type="entry name" value="Tetratricopeptide repeat domain"/>
    <property type="match status" value="1"/>
</dbReference>
<dbReference type="InterPro" id="IPR011990">
    <property type="entry name" value="TPR-like_helical_dom_sf"/>
</dbReference>
<dbReference type="InterPro" id="IPR033891">
    <property type="entry name" value="TTC38"/>
</dbReference>
<dbReference type="PANTHER" id="PTHR16263">
    <property type="entry name" value="TETRATRICOPEPTIDE REPEAT PROTEIN 38"/>
    <property type="match status" value="1"/>
</dbReference>
<dbReference type="PANTHER" id="PTHR16263:SF4">
    <property type="entry name" value="TETRATRICOPEPTIDE REPEAT PROTEIN 38"/>
    <property type="match status" value="1"/>
</dbReference>
<dbReference type="SUPFAM" id="SSF48452">
    <property type="entry name" value="TPR-like"/>
    <property type="match status" value="1"/>
</dbReference>
<accession>Q5RFF7</accession>
<proteinExistence type="evidence at transcript level"/>
<keyword id="KW-0007">Acetylation</keyword>
<keyword id="KW-0597">Phosphoprotein</keyword>
<keyword id="KW-1185">Reference proteome</keyword>
<keyword id="KW-0677">Repeat</keyword>
<keyword id="KW-0802">TPR repeat</keyword>
<evidence type="ECO:0000250" key="1">
    <source>
        <dbReference type="UniProtKB" id="Q5R3I4"/>
    </source>
</evidence>
<evidence type="ECO:0000305" key="2"/>